<proteinExistence type="inferred from homology"/>
<comment type="similarity">
    <text evidence="1">Belongs to the UPF0212 family.</text>
</comment>
<reference key="1">
    <citation type="journal article" date="2007" name="Genome Biol.">
        <title>Genome analysis and genome-wide proteomics of Thermococcus gammatolerans, the most radioresistant organism known amongst the Archaea.</title>
        <authorList>
            <person name="Zivanovic Y."/>
            <person name="Armengaud J."/>
            <person name="Lagorce A."/>
            <person name="Leplat C."/>
            <person name="Guerin P."/>
            <person name="Dutertre M."/>
            <person name="Anthouard V."/>
            <person name="Forterre P."/>
            <person name="Wincker P."/>
            <person name="Confalonieri F."/>
        </authorList>
    </citation>
    <scope>NUCLEOTIDE SEQUENCE [LARGE SCALE GENOMIC DNA]</scope>
    <source>
        <strain>DSM 15229 / JCM 11827 / EJ3</strain>
    </source>
</reference>
<feature type="chain" id="PRO_1000213978" description="UPF0212 protein TGAM_1344">
    <location>
        <begin position="1"/>
        <end position="128"/>
    </location>
</feature>
<gene>
    <name type="ordered locus">TGAM_1344</name>
</gene>
<protein>
    <recommendedName>
        <fullName evidence="1">UPF0212 protein TGAM_1344</fullName>
    </recommendedName>
</protein>
<evidence type="ECO:0000255" key="1">
    <source>
        <dbReference type="HAMAP-Rule" id="MF_01223"/>
    </source>
</evidence>
<dbReference type="EMBL" id="CP001398">
    <property type="protein sequence ID" value="ACS33846.1"/>
    <property type="molecule type" value="Genomic_DNA"/>
</dbReference>
<dbReference type="RefSeq" id="WP_015858958.1">
    <property type="nucleotide sequence ID" value="NC_012804.1"/>
</dbReference>
<dbReference type="STRING" id="593117.TGAM_1344"/>
<dbReference type="PaxDb" id="593117-TGAM_1344"/>
<dbReference type="GeneID" id="7988403"/>
<dbReference type="KEGG" id="tga:TGAM_1344"/>
<dbReference type="PATRIC" id="fig|593117.10.peg.1343"/>
<dbReference type="eggNOG" id="arCOG02119">
    <property type="taxonomic scope" value="Archaea"/>
</dbReference>
<dbReference type="HOGENOM" id="CLU_138334_0_0_2"/>
<dbReference type="OrthoDB" id="63517at2157"/>
<dbReference type="Proteomes" id="UP000001488">
    <property type="component" value="Chromosome"/>
</dbReference>
<dbReference type="HAMAP" id="MF_01223">
    <property type="entry name" value="UPF0212"/>
    <property type="match status" value="1"/>
</dbReference>
<dbReference type="InterPro" id="IPR007564">
    <property type="entry name" value="UPF0212"/>
</dbReference>
<dbReference type="NCBIfam" id="NF003035">
    <property type="entry name" value="PRK03922.1"/>
    <property type="match status" value="1"/>
</dbReference>
<dbReference type="PANTHER" id="PTHR42199">
    <property type="entry name" value="UPF0212 PROTEIN MJ0068"/>
    <property type="match status" value="1"/>
</dbReference>
<dbReference type="PANTHER" id="PTHR42199:SF1">
    <property type="entry name" value="UPF0212 PROTEIN TK1194"/>
    <property type="match status" value="1"/>
</dbReference>
<dbReference type="Pfam" id="PF04475">
    <property type="entry name" value="DUF555"/>
    <property type="match status" value="1"/>
</dbReference>
<dbReference type="PIRSF" id="PIRSF016934">
    <property type="entry name" value="UCP016934"/>
    <property type="match status" value="1"/>
</dbReference>
<name>Y1344_THEGJ</name>
<sequence>MGDYVVVLEAPIIVKDVETSEDAINVAVSKVAKALNKENLDFVRVEIGYSQCPVCGAHFESAFVIGSVGLVGIYLTLKVFNAQSIEHAERIAKAVVGKALKRVPLKVFEIRELEEENGDGLEVPDEFE</sequence>
<accession>C5A6I4</accession>
<organism>
    <name type="scientific">Thermococcus gammatolerans (strain DSM 15229 / JCM 11827 / EJ3)</name>
    <dbReference type="NCBI Taxonomy" id="593117"/>
    <lineage>
        <taxon>Archaea</taxon>
        <taxon>Methanobacteriati</taxon>
        <taxon>Methanobacteriota</taxon>
        <taxon>Thermococci</taxon>
        <taxon>Thermococcales</taxon>
        <taxon>Thermococcaceae</taxon>
        <taxon>Thermococcus</taxon>
    </lineage>
</organism>
<keyword id="KW-1185">Reference proteome</keyword>